<name>DER_STAAN</name>
<evidence type="ECO:0000255" key="1">
    <source>
        <dbReference type="HAMAP-Rule" id="MF_00195"/>
    </source>
</evidence>
<gene>
    <name evidence="1" type="primary">der</name>
    <name type="synonym">engA</name>
    <name type="ordered locus">SA1307</name>
</gene>
<reference key="1">
    <citation type="journal article" date="2001" name="Lancet">
        <title>Whole genome sequencing of meticillin-resistant Staphylococcus aureus.</title>
        <authorList>
            <person name="Kuroda M."/>
            <person name="Ohta T."/>
            <person name="Uchiyama I."/>
            <person name="Baba T."/>
            <person name="Yuzawa H."/>
            <person name="Kobayashi I."/>
            <person name="Cui L."/>
            <person name="Oguchi A."/>
            <person name="Aoki K."/>
            <person name="Nagai Y."/>
            <person name="Lian J.-Q."/>
            <person name="Ito T."/>
            <person name="Kanamori M."/>
            <person name="Matsumaru H."/>
            <person name="Maruyama A."/>
            <person name="Murakami H."/>
            <person name="Hosoyama A."/>
            <person name="Mizutani-Ui Y."/>
            <person name="Takahashi N.K."/>
            <person name="Sawano T."/>
            <person name="Inoue R."/>
            <person name="Kaito C."/>
            <person name="Sekimizu K."/>
            <person name="Hirakawa H."/>
            <person name="Kuhara S."/>
            <person name="Goto S."/>
            <person name="Yabuzaki J."/>
            <person name="Kanehisa M."/>
            <person name="Yamashita A."/>
            <person name="Oshima K."/>
            <person name="Furuya K."/>
            <person name="Yoshino C."/>
            <person name="Shiba T."/>
            <person name="Hattori M."/>
            <person name="Ogasawara N."/>
            <person name="Hayashi H."/>
            <person name="Hiramatsu K."/>
        </authorList>
    </citation>
    <scope>NUCLEOTIDE SEQUENCE [LARGE SCALE GENOMIC DNA]</scope>
    <source>
        <strain>N315</strain>
    </source>
</reference>
<reference key="2">
    <citation type="submission" date="2007-10" db="UniProtKB">
        <title>Shotgun proteomic analysis of total and membrane protein extracts of S. aureus strain N315.</title>
        <authorList>
            <person name="Vaezzadeh A.R."/>
            <person name="Deshusses J."/>
            <person name="Lescuyer P."/>
            <person name="Hochstrasser D.F."/>
        </authorList>
    </citation>
    <scope>IDENTIFICATION BY MASS SPECTROMETRY [LARGE SCALE ANALYSIS]</scope>
    <source>
        <strain>N315</strain>
    </source>
</reference>
<sequence>MTKPIVAIVGRPNVGKSTIFNRIVGERVSIVEDTPGVTRDRIYSSGEWLTHDFNIIDTGGIEIGDAPFQTQIRAQAEIAIDEADVIIFMVNVREGLTQSDEMVAQILYKSKKPVVLAVNKVDNMEMRTDVYDFYSLGFGEPYPISGSHGLGLGDLLDAVVSHFGEEEEDPYDEDTIRLSIIGRPNVGKSSLVNAILGEDRVIVSNVAGTTRDAIDTEYSYDGQDYVLIDTAGMRKKGKVYESTEKYSVLRALKAIERSNVVLVVIDAEQGIIEQDKRVAGYAHEQGKAVVIVVNKWDTVEKDSKTMKKFEDEVRKEFQFLDYAQIAFVSAKERTRLRTLFPYINEASENHKKRVQSSTLNEVVTDAISMNPTPTDKGRRLNVFYATQVAIEPPTFVVFVNDVELMHFSYKRYLENQIRAAFGFEGTPIHIIARKRN</sequence>
<keyword id="KW-0342">GTP-binding</keyword>
<keyword id="KW-0547">Nucleotide-binding</keyword>
<keyword id="KW-0677">Repeat</keyword>
<keyword id="KW-0690">Ribosome biogenesis</keyword>
<dbReference type="EMBL" id="BA000018">
    <property type="protein sequence ID" value="BAB42568.1"/>
    <property type="molecule type" value="Genomic_DNA"/>
</dbReference>
<dbReference type="PIR" id="C89926">
    <property type="entry name" value="C89926"/>
</dbReference>
<dbReference type="RefSeq" id="WP_000165530.1">
    <property type="nucleotide sequence ID" value="NC_002745.2"/>
</dbReference>
<dbReference type="SMR" id="P64060"/>
<dbReference type="EnsemblBacteria" id="BAB42568">
    <property type="protein sequence ID" value="BAB42568"/>
    <property type="gene ID" value="BAB42568"/>
</dbReference>
<dbReference type="KEGG" id="sau:SA1307"/>
<dbReference type="HOGENOM" id="CLU_016077_6_2_9"/>
<dbReference type="GO" id="GO:0005525">
    <property type="term" value="F:GTP binding"/>
    <property type="evidence" value="ECO:0007669"/>
    <property type="project" value="UniProtKB-UniRule"/>
</dbReference>
<dbReference type="GO" id="GO:0043022">
    <property type="term" value="F:ribosome binding"/>
    <property type="evidence" value="ECO:0007669"/>
    <property type="project" value="TreeGrafter"/>
</dbReference>
<dbReference type="GO" id="GO:0042254">
    <property type="term" value="P:ribosome biogenesis"/>
    <property type="evidence" value="ECO:0007669"/>
    <property type="project" value="UniProtKB-KW"/>
</dbReference>
<dbReference type="CDD" id="cd01894">
    <property type="entry name" value="EngA1"/>
    <property type="match status" value="1"/>
</dbReference>
<dbReference type="CDD" id="cd01895">
    <property type="entry name" value="EngA2"/>
    <property type="match status" value="1"/>
</dbReference>
<dbReference type="FunFam" id="3.30.300.20:FF:000004">
    <property type="entry name" value="GTPase Der"/>
    <property type="match status" value="1"/>
</dbReference>
<dbReference type="FunFam" id="3.40.50.300:FF:000040">
    <property type="entry name" value="GTPase Der"/>
    <property type="match status" value="1"/>
</dbReference>
<dbReference type="FunFam" id="3.40.50.300:FF:000057">
    <property type="entry name" value="GTPase Der"/>
    <property type="match status" value="1"/>
</dbReference>
<dbReference type="Gene3D" id="3.30.300.20">
    <property type="match status" value="1"/>
</dbReference>
<dbReference type="Gene3D" id="3.40.50.300">
    <property type="entry name" value="P-loop containing nucleotide triphosphate hydrolases"/>
    <property type="match status" value="2"/>
</dbReference>
<dbReference type="HAMAP" id="MF_00195">
    <property type="entry name" value="GTPase_Der"/>
    <property type="match status" value="1"/>
</dbReference>
<dbReference type="InterPro" id="IPR031166">
    <property type="entry name" value="G_ENGA"/>
</dbReference>
<dbReference type="InterPro" id="IPR006073">
    <property type="entry name" value="GTP-bd"/>
</dbReference>
<dbReference type="InterPro" id="IPR016484">
    <property type="entry name" value="GTPase_Der"/>
</dbReference>
<dbReference type="InterPro" id="IPR032859">
    <property type="entry name" value="KH_dom-like"/>
</dbReference>
<dbReference type="InterPro" id="IPR015946">
    <property type="entry name" value="KH_dom-like_a/b"/>
</dbReference>
<dbReference type="InterPro" id="IPR027417">
    <property type="entry name" value="P-loop_NTPase"/>
</dbReference>
<dbReference type="InterPro" id="IPR005225">
    <property type="entry name" value="Small_GTP-bd"/>
</dbReference>
<dbReference type="NCBIfam" id="TIGR03594">
    <property type="entry name" value="GTPase_EngA"/>
    <property type="match status" value="1"/>
</dbReference>
<dbReference type="NCBIfam" id="TIGR00231">
    <property type="entry name" value="small_GTP"/>
    <property type="match status" value="2"/>
</dbReference>
<dbReference type="PANTHER" id="PTHR43834">
    <property type="entry name" value="GTPASE DER"/>
    <property type="match status" value="1"/>
</dbReference>
<dbReference type="PANTHER" id="PTHR43834:SF6">
    <property type="entry name" value="GTPASE DER"/>
    <property type="match status" value="1"/>
</dbReference>
<dbReference type="Pfam" id="PF14714">
    <property type="entry name" value="KH_dom-like"/>
    <property type="match status" value="1"/>
</dbReference>
<dbReference type="Pfam" id="PF01926">
    <property type="entry name" value="MMR_HSR1"/>
    <property type="match status" value="2"/>
</dbReference>
<dbReference type="PIRSF" id="PIRSF006485">
    <property type="entry name" value="GTP-binding_EngA"/>
    <property type="match status" value="1"/>
</dbReference>
<dbReference type="PRINTS" id="PR00326">
    <property type="entry name" value="GTP1OBG"/>
</dbReference>
<dbReference type="SUPFAM" id="SSF52540">
    <property type="entry name" value="P-loop containing nucleoside triphosphate hydrolases"/>
    <property type="match status" value="2"/>
</dbReference>
<dbReference type="PROSITE" id="PS51712">
    <property type="entry name" value="G_ENGA"/>
    <property type="match status" value="2"/>
</dbReference>
<organism>
    <name type="scientific">Staphylococcus aureus (strain N315)</name>
    <dbReference type="NCBI Taxonomy" id="158879"/>
    <lineage>
        <taxon>Bacteria</taxon>
        <taxon>Bacillati</taxon>
        <taxon>Bacillota</taxon>
        <taxon>Bacilli</taxon>
        <taxon>Bacillales</taxon>
        <taxon>Staphylococcaceae</taxon>
        <taxon>Staphylococcus</taxon>
    </lineage>
</organism>
<feature type="chain" id="PRO_0000179044" description="GTPase Der">
    <location>
        <begin position="1"/>
        <end position="436"/>
    </location>
</feature>
<feature type="domain" description="EngA-type G 1">
    <location>
        <begin position="4"/>
        <end position="167"/>
    </location>
</feature>
<feature type="domain" description="EngA-type G 2">
    <location>
        <begin position="176"/>
        <end position="351"/>
    </location>
</feature>
<feature type="domain" description="KH-like" evidence="1">
    <location>
        <begin position="352"/>
        <end position="436"/>
    </location>
</feature>
<feature type="binding site" evidence="1">
    <location>
        <begin position="10"/>
        <end position="17"/>
    </location>
    <ligand>
        <name>GTP</name>
        <dbReference type="ChEBI" id="CHEBI:37565"/>
        <label>1</label>
    </ligand>
</feature>
<feature type="binding site" evidence="1">
    <location>
        <begin position="57"/>
        <end position="61"/>
    </location>
    <ligand>
        <name>GTP</name>
        <dbReference type="ChEBI" id="CHEBI:37565"/>
        <label>1</label>
    </ligand>
</feature>
<feature type="binding site" evidence="1">
    <location>
        <begin position="119"/>
        <end position="122"/>
    </location>
    <ligand>
        <name>GTP</name>
        <dbReference type="ChEBI" id="CHEBI:37565"/>
        <label>1</label>
    </ligand>
</feature>
<feature type="binding site" evidence="1">
    <location>
        <begin position="182"/>
        <end position="189"/>
    </location>
    <ligand>
        <name>GTP</name>
        <dbReference type="ChEBI" id="CHEBI:37565"/>
        <label>2</label>
    </ligand>
</feature>
<feature type="binding site" evidence="1">
    <location>
        <begin position="229"/>
        <end position="233"/>
    </location>
    <ligand>
        <name>GTP</name>
        <dbReference type="ChEBI" id="CHEBI:37565"/>
        <label>2</label>
    </ligand>
</feature>
<feature type="binding site" evidence="1">
    <location>
        <begin position="294"/>
        <end position="297"/>
    </location>
    <ligand>
        <name>GTP</name>
        <dbReference type="ChEBI" id="CHEBI:37565"/>
        <label>2</label>
    </ligand>
</feature>
<protein>
    <recommendedName>
        <fullName evidence="1">GTPase Der</fullName>
    </recommendedName>
    <alternativeName>
        <fullName evidence="1">GTP-binding protein EngA</fullName>
    </alternativeName>
</protein>
<proteinExistence type="evidence at protein level"/>
<comment type="function">
    <text evidence="1">GTPase that plays an essential role in the late steps of ribosome biogenesis.</text>
</comment>
<comment type="subunit">
    <text evidence="1">Associates with the 50S ribosomal subunit.</text>
</comment>
<comment type="similarity">
    <text evidence="1">Belongs to the TRAFAC class TrmE-Era-EngA-EngB-Septin-like GTPase superfamily. EngA (Der) GTPase family.</text>
</comment>
<accession>P64060</accession>
<accession>Q99U15</accession>